<organism>
    <name type="scientific">Rhizobium etli (strain ATCC 51251 / DSM 11541 / JCM 21823 / NBRC 15573 / CFN 42)</name>
    <dbReference type="NCBI Taxonomy" id="347834"/>
    <lineage>
        <taxon>Bacteria</taxon>
        <taxon>Pseudomonadati</taxon>
        <taxon>Pseudomonadota</taxon>
        <taxon>Alphaproteobacteria</taxon>
        <taxon>Hyphomicrobiales</taxon>
        <taxon>Rhizobiaceae</taxon>
        <taxon>Rhizobium/Agrobacterium group</taxon>
        <taxon>Rhizobium</taxon>
    </lineage>
</organism>
<comment type="function">
    <text evidence="1">Cell wall formation. Catalyzes the transfer of a GlcNAc subunit on undecaprenyl-pyrophosphoryl-MurNAc-pentapeptide (lipid intermediate I) to form undecaprenyl-pyrophosphoryl-MurNAc-(pentapeptide)GlcNAc (lipid intermediate II).</text>
</comment>
<comment type="catalytic activity">
    <reaction evidence="1">
        <text>di-trans,octa-cis-undecaprenyl diphospho-N-acetyl-alpha-D-muramoyl-L-alanyl-D-glutamyl-meso-2,6-diaminopimeloyl-D-alanyl-D-alanine + UDP-N-acetyl-alpha-D-glucosamine = di-trans,octa-cis-undecaprenyl diphospho-[N-acetyl-alpha-D-glucosaminyl-(1-&gt;4)]-N-acetyl-alpha-D-muramoyl-L-alanyl-D-glutamyl-meso-2,6-diaminopimeloyl-D-alanyl-D-alanine + UDP + H(+)</text>
        <dbReference type="Rhea" id="RHEA:31227"/>
        <dbReference type="ChEBI" id="CHEBI:15378"/>
        <dbReference type="ChEBI" id="CHEBI:57705"/>
        <dbReference type="ChEBI" id="CHEBI:58223"/>
        <dbReference type="ChEBI" id="CHEBI:61387"/>
        <dbReference type="ChEBI" id="CHEBI:61388"/>
        <dbReference type="EC" id="2.4.1.227"/>
    </reaction>
</comment>
<comment type="pathway">
    <text evidence="1">Cell wall biogenesis; peptidoglycan biosynthesis.</text>
</comment>
<comment type="subcellular location">
    <subcellularLocation>
        <location evidence="1">Cell inner membrane</location>
        <topology evidence="1">Peripheral membrane protein</topology>
        <orientation evidence="1">Cytoplasmic side</orientation>
    </subcellularLocation>
</comment>
<comment type="similarity">
    <text evidence="1">Belongs to the glycosyltransferase 28 family. MurG subfamily.</text>
</comment>
<evidence type="ECO:0000255" key="1">
    <source>
        <dbReference type="HAMAP-Rule" id="MF_00033"/>
    </source>
</evidence>
<name>MURG_RHIEC</name>
<gene>
    <name evidence="1" type="primary">murG</name>
    <name type="ordered locus">RHE_CH02847</name>
</gene>
<feature type="chain" id="PRO_0000315146" description="UDP-N-acetylglucosamine--N-acetylmuramyl-(pentapeptide) pyrophosphoryl-undecaprenol N-acetylglucosamine transferase">
    <location>
        <begin position="1"/>
        <end position="374"/>
    </location>
</feature>
<feature type="binding site" evidence="1">
    <location>
        <begin position="13"/>
        <end position="15"/>
    </location>
    <ligand>
        <name>UDP-N-acetyl-alpha-D-glucosamine</name>
        <dbReference type="ChEBI" id="CHEBI:57705"/>
    </ligand>
</feature>
<feature type="binding site" evidence="1">
    <location>
        <position position="124"/>
    </location>
    <ligand>
        <name>UDP-N-acetyl-alpha-D-glucosamine</name>
        <dbReference type="ChEBI" id="CHEBI:57705"/>
    </ligand>
</feature>
<feature type="binding site" evidence="1">
    <location>
        <position position="165"/>
    </location>
    <ligand>
        <name>UDP-N-acetyl-alpha-D-glucosamine</name>
        <dbReference type="ChEBI" id="CHEBI:57705"/>
    </ligand>
</feature>
<feature type="binding site" evidence="1">
    <location>
        <position position="193"/>
    </location>
    <ligand>
        <name>UDP-N-acetyl-alpha-D-glucosamine</name>
        <dbReference type="ChEBI" id="CHEBI:57705"/>
    </ligand>
</feature>
<feature type="binding site" evidence="1">
    <location>
        <position position="294"/>
    </location>
    <ligand>
        <name>UDP-N-acetyl-alpha-D-glucosamine</name>
        <dbReference type="ChEBI" id="CHEBI:57705"/>
    </ligand>
</feature>
<dbReference type="EC" id="2.4.1.227" evidence="1"/>
<dbReference type="EMBL" id="CP000133">
    <property type="protein sequence ID" value="ABC91615.1"/>
    <property type="molecule type" value="Genomic_DNA"/>
</dbReference>
<dbReference type="RefSeq" id="WP_011426092.1">
    <property type="nucleotide sequence ID" value="NC_007761.1"/>
</dbReference>
<dbReference type="SMR" id="Q2K6C1"/>
<dbReference type="CAZy" id="GT28">
    <property type="family name" value="Glycosyltransferase Family 28"/>
</dbReference>
<dbReference type="KEGG" id="ret:RHE_CH02847"/>
<dbReference type="eggNOG" id="COG0707">
    <property type="taxonomic scope" value="Bacteria"/>
</dbReference>
<dbReference type="HOGENOM" id="CLU_037404_2_1_5"/>
<dbReference type="OrthoDB" id="9808936at2"/>
<dbReference type="UniPathway" id="UPA00219"/>
<dbReference type="Proteomes" id="UP000001936">
    <property type="component" value="Chromosome"/>
</dbReference>
<dbReference type="GO" id="GO:0005886">
    <property type="term" value="C:plasma membrane"/>
    <property type="evidence" value="ECO:0007669"/>
    <property type="project" value="UniProtKB-SubCell"/>
</dbReference>
<dbReference type="GO" id="GO:0051991">
    <property type="term" value="F:UDP-N-acetyl-D-glucosamine:N-acetylmuramoyl-L-alanyl-D-glutamyl-meso-2,6-diaminopimelyl-D-alanyl-D-alanine-diphosphoundecaprenol 4-beta-N-acetylglucosaminlytransferase activity"/>
    <property type="evidence" value="ECO:0007669"/>
    <property type="project" value="RHEA"/>
</dbReference>
<dbReference type="GO" id="GO:0050511">
    <property type="term" value="F:undecaprenyldiphospho-muramoylpentapeptide beta-N-acetylglucosaminyltransferase activity"/>
    <property type="evidence" value="ECO:0007669"/>
    <property type="project" value="UniProtKB-UniRule"/>
</dbReference>
<dbReference type="GO" id="GO:0005975">
    <property type="term" value="P:carbohydrate metabolic process"/>
    <property type="evidence" value="ECO:0007669"/>
    <property type="project" value="InterPro"/>
</dbReference>
<dbReference type="GO" id="GO:0051301">
    <property type="term" value="P:cell division"/>
    <property type="evidence" value="ECO:0007669"/>
    <property type="project" value="UniProtKB-KW"/>
</dbReference>
<dbReference type="GO" id="GO:0071555">
    <property type="term" value="P:cell wall organization"/>
    <property type="evidence" value="ECO:0007669"/>
    <property type="project" value="UniProtKB-KW"/>
</dbReference>
<dbReference type="GO" id="GO:0030259">
    <property type="term" value="P:lipid glycosylation"/>
    <property type="evidence" value="ECO:0007669"/>
    <property type="project" value="UniProtKB-UniRule"/>
</dbReference>
<dbReference type="GO" id="GO:0009252">
    <property type="term" value="P:peptidoglycan biosynthetic process"/>
    <property type="evidence" value="ECO:0007669"/>
    <property type="project" value="UniProtKB-UniRule"/>
</dbReference>
<dbReference type="GO" id="GO:0008360">
    <property type="term" value="P:regulation of cell shape"/>
    <property type="evidence" value="ECO:0007669"/>
    <property type="project" value="UniProtKB-KW"/>
</dbReference>
<dbReference type="CDD" id="cd03785">
    <property type="entry name" value="GT28_MurG"/>
    <property type="match status" value="1"/>
</dbReference>
<dbReference type="Gene3D" id="3.40.50.2000">
    <property type="entry name" value="Glycogen Phosphorylase B"/>
    <property type="match status" value="2"/>
</dbReference>
<dbReference type="HAMAP" id="MF_00033">
    <property type="entry name" value="MurG"/>
    <property type="match status" value="1"/>
</dbReference>
<dbReference type="InterPro" id="IPR006009">
    <property type="entry name" value="GlcNAc_MurG"/>
</dbReference>
<dbReference type="InterPro" id="IPR007235">
    <property type="entry name" value="Glyco_trans_28_C"/>
</dbReference>
<dbReference type="InterPro" id="IPR004276">
    <property type="entry name" value="GlycoTrans_28_N"/>
</dbReference>
<dbReference type="NCBIfam" id="TIGR01133">
    <property type="entry name" value="murG"/>
    <property type="match status" value="1"/>
</dbReference>
<dbReference type="PANTHER" id="PTHR21015:SF22">
    <property type="entry name" value="GLYCOSYLTRANSFERASE"/>
    <property type="match status" value="1"/>
</dbReference>
<dbReference type="PANTHER" id="PTHR21015">
    <property type="entry name" value="UDP-N-ACETYLGLUCOSAMINE--N-ACETYLMURAMYL-(PENTAPEPTIDE) PYROPHOSPHORYL-UNDECAPRENOL N-ACETYLGLUCOSAMINE TRANSFERASE 1"/>
    <property type="match status" value="1"/>
</dbReference>
<dbReference type="Pfam" id="PF04101">
    <property type="entry name" value="Glyco_tran_28_C"/>
    <property type="match status" value="1"/>
</dbReference>
<dbReference type="Pfam" id="PF03033">
    <property type="entry name" value="Glyco_transf_28"/>
    <property type="match status" value="1"/>
</dbReference>
<dbReference type="SUPFAM" id="SSF53756">
    <property type="entry name" value="UDP-Glycosyltransferase/glycogen phosphorylase"/>
    <property type="match status" value="1"/>
</dbReference>
<keyword id="KW-0131">Cell cycle</keyword>
<keyword id="KW-0132">Cell division</keyword>
<keyword id="KW-0997">Cell inner membrane</keyword>
<keyword id="KW-1003">Cell membrane</keyword>
<keyword id="KW-0133">Cell shape</keyword>
<keyword id="KW-0961">Cell wall biogenesis/degradation</keyword>
<keyword id="KW-0328">Glycosyltransferase</keyword>
<keyword id="KW-0472">Membrane</keyword>
<keyword id="KW-0573">Peptidoglycan synthesis</keyword>
<keyword id="KW-1185">Reference proteome</keyword>
<keyword id="KW-0808">Transferase</keyword>
<protein>
    <recommendedName>
        <fullName evidence="1">UDP-N-acetylglucosamine--N-acetylmuramyl-(pentapeptide) pyrophosphoryl-undecaprenol N-acetylglucosamine transferase</fullName>
        <ecNumber evidence="1">2.4.1.227</ecNumber>
    </recommendedName>
    <alternativeName>
        <fullName evidence="1">Undecaprenyl-PP-MurNAc-pentapeptide-UDPGlcNAc GlcNAc transferase</fullName>
    </alternativeName>
</protein>
<proteinExistence type="inferred from homology"/>
<sequence>MSKGIVLLAAGGTGGHVFPAEALAFKLKERGYSVHLVTDSRAERYAGKFPAEEIHVVPSATIGSKNPVAVARSLWTLWSGMRAAKRLIQRLKPVIVVGFGGYPTVPPLLAATRLGVASMLHEQNAVMGRANKALAPRVKAIAGGFLPESGDVFSDKTVATGNPVRPAILAAAEQPYLPSHPGEPFNLVVFGGSQGAQYFSKAMPTAISLLDDGLRARLRVTQQVRPEDMEMVSGCVAKLEMGADIAPFFNDMAERLAQAHLVICRSGASTVSEISVIGRPAILVPYPHALDHDQAANAAALAATGGAKVIPQSELSPERIASILSHVMNDPDKLSHMAAAAKLAGKPDAANLLADMVEAIAAGKTVSEFKRTRA</sequence>
<reference key="1">
    <citation type="journal article" date="2006" name="Proc. Natl. Acad. Sci. U.S.A.">
        <title>The partitioned Rhizobium etli genome: genetic and metabolic redundancy in seven interacting replicons.</title>
        <authorList>
            <person name="Gonzalez V."/>
            <person name="Santamaria R.I."/>
            <person name="Bustos P."/>
            <person name="Hernandez-Gonzalez I."/>
            <person name="Medrano-Soto A."/>
            <person name="Moreno-Hagelsieb G."/>
            <person name="Janga S.C."/>
            <person name="Ramirez M.A."/>
            <person name="Jimenez-Jacinto V."/>
            <person name="Collado-Vides J."/>
            <person name="Davila G."/>
        </authorList>
    </citation>
    <scope>NUCLEOTIDE SEQUENCE [LARGE SCALE GENOMIC DNA]</scope>
    <source>
        <strain>ATCC 51251 / DSM 11541 / JCM 21823 / NBRC 15573 / CFN 42</strain>
    </source>
</reference>
<accession>Q2K6C1</accession>